<gene>
    <name evidence="1" type="primary">aroB</name>
    <name type="ordered locus">TK0267</name>
</gene>
<proteinExistence type="inferred from homology"/>
<name>AROB_THEKO</name>
<feature type="chain" id="PRO_0000140820" description="3-dehydroquinate synthase">
    <location>
        <begin position="1"/>
        <end position="341"/>
    </location>
</feature>
<feature type="binding site" evidence="1">
    <location>
        <begin position="54"/>
        <end position="59"/>
    </location>
    <ligand>
        <name>NAD(+)</name>
        <dbReference type="ChEBI" id="CHEBI:57540"/>
    </ligand>
</feature>
<feature type="binding site" evidence="1">
    <location>
        <begin position="88"/>
        <end position="92"/>
    </location>
    <ligand>
        <name>NAD(+)</name>
        <dbReference type="ChEBI" id="CHEBI:57540"/>
    </ligand>
</feature>
<feature type="binding site" evidence="1">
    <location>
        <begin position="112"/>
        <end position="113"/>
    </location>
    <ligand>
        <name>NAD(+)</name>
        <dbReference type="ChEBI" id="CHEBI:57540"/>
    </ligand>
</feature>
<feature type="binding site" evidence="1">
    <location>
        <position position="125"/>
    </location>
    <ligand>
        <name>NAD(+)</name>
        <dbReference type="ChEBI" id="CHEBI:57540"/>
    </ligand>
</feature>
<feature type="binding site" evidence="1">
    <location>
        <position position="133"/>
    </location>
    <ligand>
        <name>NAD(+)</name>
        <dbReference type="ChEBI" id="CHEBI:57540"/>
    </ligand>
</feature>
<feature type="binding site" evidence="1">
    <location>
        <begin position="151"/>
        <end position="154"/>
    </location>
    <ligand>
        <name>NAD(+)</name>
        <dbReference type="ChEBI" id="CHEBI:57540"/>
    </ligand>
</feature>
<feature type="binding site" evidence="1">
    <location>
        <position position="166"/>
    </location>
    <ligand>
        <name>Zn(2+)</name>
        <dbReference type="ChEBI" id="CHEBI:29105"/>
    </ligand>
</feature>
<feature type="binding site" evidence="1">
    <location>
        <position position="220"/>
    </location>
    <ligand>
        <name>Zn(2+)</name>
        <dbReference type="ChEBI" id="CHEBI:29105"/>
    </ligand>
</feature>
<feature type="binding site" evidence="1">
    <location>
        <position position="236"/>
    </location>
    <ligand>
        <name>Zn(2+)</name>
        <dbReference type="ChEBI" id="CHEBI:29105"/>
    </ligand>
</feature>
<reference key="1">
    <citation type="journal article" date="2005" name="Genome Res.">
        <title>Complete genome sequence of the hyperthermophilic archaeon Thermococcus kodakaraensis KOD1 and comparison with Pyrococcus genomes.</title>
        <authorList>
            <person name="Fukui T."/>
            <person name="Atomi H."/>
            <person name="Kanai T."/>
            <person name="Matsumi R."/>
            <person name="Fujiwara S."/>
            <person name="Imanaka T."/>
        </authorList>
    </citation>
    <scope>NUCLEOTIDE SEQUENCE [LARGE SCALE GENOMIC DNA]</scope>
    <source>
        <strain>ATCC BAA-918 / JCM 12380 / KOD1</strain>
    </source>
</reference>
<organism>
    <name type="scientific">Thermococcus kodakarensis (strain ATCC BAA-918 / JCM 12380 / KOD1)</name>
    <name type="common">Pyrococcus kodakaraensis (strain KOD1)</name>
    <dbReference type="NCBI Taxonomy" id="69014"/>
    <lineage>
        <taxon>Archaea</taxon>
        <taxon>Methanobacteriati</taxon>
        <taxon>Methanobacteriota</taxon>
        <taxon>Thermococci</taxon>
        <taxon>Thermococcales</taxon>
        <taxon>Thermococcaceae</taxon>
        <taxon>Thermococcus</taxon>
    </lineage>
</organism>
<protein>
    <recommendedName>
        <fullName evidence="1">3-dehydroquinate synthase</fullName>
        <shortName evidence="1">DHQS</shortName>
        <ecNumber evidence="1">4.2.3.4</ecNumber>
    </recommendedName>
</protein>
<sequence>MEGLSFGPLSILPSLAEELNPHRVAFLTNTTVERLWLEKAAEGIEEPIRIVIPDGEKYKSLETAVAIWKRLQEEGFTRKSLLIGLGGGVVTDIAGFVASTYMRGTLLGLVPTTLLAQVDAAIGGKTGVNFNGKNMIGTFYLPNFVLIAHETLSTLPEEEIRNGLGEVAKYALLDRKVYALARNFEGISETLIRECALFKVEVVEKDLGESGLRRILNLGHTAGHAIEKLSNYRIKHGLAVSMGLMVASKVGEELYGFDSGKTEELLKKLGLPTGHPFRAEEILEEMRLDKKAWYGRITFVIPVEIGDVVVEEVDEAVLKRALEATRDDSGSGDCQKPGGSA</sequence>
<accession>Q5JFX1</accession>
<evidence type="ECO:0000255" key="1">
    <source>
        <dbReference type="HAMAP-Rule" id="MF_00110"/>
    </source>
</evidence>
<keyword id="KW-0028">Amino-acid biosynthesis</keyword>
<keyword id="KW-0057">Aromatic amino acid biosynthesis</keyword>
<keyword id="KW-0170">Cobalt</keyword>
<keyword id="KW-0963">Cytoplasm</keyword>
<keyword id="KW-0456">Lyase</keyword>
<keyword id="KW-0479">Metal-binding</keyword>
<keyword id="KW-0520">NAD</keyword>
<keyword id="KW-0547">Nucleotide-binding</keyword>
<keyword id="KW-1185">Reference proteome</keyword>
<keyword id="KW-0862">Zinc</keyword>
<comment type="function">
    <text evidence="1">Catalyzes the conversion of 3-deoxy-D-arabino-heptulosonate 7-phosphate (DAHP) to dehydroquinate (DHQ).</text>
</comment>
<comment type="catalytic activity">
    <reaction evidence="1">
        <text>7-phospho-2-dehydro-3-deoxy-D-arabino-heptonate = 3-dehydroquinate + phosphate</text>
        <dbReference type="Rhea" id="RHEA:21968"/>
        <dbReference type="ChEBI" id="CHEBI:32364"/>
        <dbReference type="ChEBI" id="CHEBI:43474"/>
        <dbReference type="ChEBI" id="CHEBI:58394"/>
        <dbReference type="EC" id="4.2.3.4"/>
    </reaction>
</comment>
<comment type="cofactor">
    <cofactor evidence="1">
        <name>NAD(+)</name>
        <dbReference type="ChEBI" id="CHEBI:57540"/>
    </cofactor>
</comment>
<comment type="cofactor">
    <cofactor evidence="1">
        <name>Co(2+)</name>
        <dbReference type="ChEBI" id="CHEBI:48828"/>
    </cofactor>
    <cofactor evidence="1">
        <name>Zn(2+)</name>
        <dbReference type="ChEBI" id="CHEBI:29105"/>
    </cofactor>
    <text evidence="1">Binds 1 divalent metal cation per subunit. Can use either Co(2+) or Zn(2+).</text>
</comment>
<comment type="pathway">
    <text evidence="1">Metabolic intermediate biosynthesis; chorismate biosynthesis; chorismate from D-erythrose 4-phosphate and phosphoenolpyruvate: step 2/7.</text>
</comment>
<comment type="subcellular location">
    <subcellularLocation>
        <location evidence="1">Cytoplasm</location>
    </subcellularLocation>
</comment>
<comment type="similarity">
    <text evidence="1">Belongs to the sugar phosphate cyclases superfamily. Dehydroquinate synthase family.</text>
</comment>
<dbReference type="EC" id="4.2.3.4" evidence="1"/>
<dbReference type="EMBL" id="AP006878">
    <property type="protein sequence ID" value="BAD84456.1"/>
    <property type="molecule type" value="Genomic_DNA"/>
</dbReference>
<dbReference type="RefSeq" id="WP_011249222.1">
    <property type="nucleotide sequence ID" value="NC_006624.1"/>
</dbReference>
<dbReference type="SMR" id="Q5JFX1"/>
<dbReference type="STRING" id="69014.TK0267"/>
<dbReference type="EnsemblBacteria" id="BAD84456">
    <property type="protein sequence ID" value="BAD84456"/>
    <property type="gene ID" value="TK0267"/>
</dbReference>
<dbReference type="GeneID" id="78446770"/>
<dbReference type="KEGG" id="tko:TK0267"/>
<dbReference type="PATRIC" id="fig|69014.16.peg.266"/>
<dbReference type="eggNOG" id="arCOG00983">
    <property type="taxonomic scope" value="Archaea"/>
</dbReference>
<dbReference type="HOGENOM" id="CLU_001201_0_1_2"/>
<dbReference type="InParanoid" id="Q5JFX1"/>
<dbReference type="OrthoDB" id="21407at2157"/>
<dbReference type="PhylomeDB" id="Q5JFX1"/>
<dbReference type="UniPathway" id="UPA00053">
    <property type="reaction ID" value="UER00085"/>
</dbReference>
<dbReference type="Proteomes" id="UP000000536">
    <property type="component" value="Chromosome"/>
</dbReference>
<dbReference type="GO" id="GO:0005737">
    <property type="term" value="C:cytoplasm"/>
    <property type="evidence" value="ECO:0007669"/>
    <property type="project" value="UniProtKB-SubCell"/>
</dbReference>
<dbReference type="GO" id="GO:0003856">
    <property type="term" value="F:3-dehydroquinate synthase activity"/>
    <property type="evidence" value="ECO:0000318"/>
    <property type="project" value="GO_Central"/>
</dbReference>
<dbReference type="GO" id="GO:0046872">
    <property type="term" value="F:metal ion binding"/>
    <property type="evidence" value="ECO:0007669"/>
    <property type="project" value="UniProtKB-KW"/>
</dbReference>
<dbReference type="GO" id="GO:0000166">
    <property type="term" value="F:nucleotide binding"/>
    <property type="evidence" value="ECO:0007669"/>
    <property type="project" value="UniProtKB-KW"/>
</dbReference>
<dbReference type="GO" id="GO:0008652">
    <property type="term" value="P:amino acid biosynthetic process"/>
    <property type="evidence" value="ECO:0007669"/>
    <property type="project" value="UniProtKB-KW"/>
</dbReference>
<dbReference type="GO" id="GO:0009073">
    <property type="term" value="P:aromatic amino acid family biosynthetic process"/>
    <property type="evidence" value="ECO:0007669"/>
    <property type="project" value="UniProtKB-KW"/>
</dbReference>
<dbReference type="GO" id="GO:0009423">
    <property type="term" value="P:chorismate biosynthetic process"/>
    <property type="evidence" value="ECO:0007669"/>
    <property type="project" value="UniProtKB-UniRule"/>
</dbReference>
<dbReference type="CDD" id="cd08195">
    <property type="entry name" value="DHQS"/>
    <property type="match status" value="1"/>
</dbReference>
<dbReference type="FunFam" id="3.40.50.1970:FF:000007">
    <property type="entry name" value="Pentafunctional AROM polypeptide"/>
    <property type="match status" value="1"/>
</dbReference>
<dbReference type="Gene3D" id="3.40.50.1970">
    <property type="match status" value="1"/>
</dbReference>
<dbReference type="Gene3D" id="1.20.1090.10">
    <property type="entry name" value="Dehydroquinate synthase-like - alpha domain"/>
    <property type="match status" value="1"/>
</dbReference>
<dbReference type="HAMAP" id="MF_00110">
    <property type="entry name" value="DHQ_synthase"/>
    <property type="match status" value="1"/>
</dbReference>
<dbReference type="InterPro" id="IPR050071">
    <property type="entry name" value="Dehydroquinate_synthase"/>
</dbReference>
<dbReference type="InterPro" id="IPR016037">
    <property type="entry name" value="DHQ_synth_AroB"/>
</dbReference>
<dbReference type="InterPro" id="IPR030963">
    <property type="entry name" value="DHQ_synth_fam"/>
</dbReference>
<dbReference type="InterPro" id="IPR030960">
    <property type="entry name" value="DHQS/DOIS_N"/>
</dbReference>
<dbReference type="InterPro" id="IPR056179">
    <property type="entry name" value="DHQS_C"/>
</dbReference>
<dbReference type="NCBIfam" id="TIGR01357">
    <property type="entry name" value="aroB"/>
    <property type="match status" value="1"/>
</dbReference>
<dbReference type="PANTHER" id="PTHR43622">
    <property type="entry name" value="3-DEHYDROQUINATE SYNTHASE"/>
    <property type="match status" value="1"/>
</dbReference>
<dbReference type="PANTHER" id="PTHR43622:SF1">
    <property type="entry name" value="3-DEHYDROQUINATE SYNTHASE"/>
    <property type="match status" value="1"/>
</dbReference>
<dbReference type="Pfam" id="PF01761">
    <property type="entry name" value="DHQ_synthase"/>
    <property type="match status" value="1"/>
</dbReference>
<dbReference type="Pfam" id="PF24621">
    <property type="entry name" value="DHQS_C"/>
    <property type="match status" value="1"/>
</dbReference>
<dbReference type="PIRSF" id="PIRSF001455">
    <property type="entry name" value="DHQ_synth"/>
    <property type="match status" value="1"/>
</dbReference>
<dbReference type="SUPFAM" id="SSF56796">
    <property type="entry name" value="Dehydroquinate synthase-like"/>
    <property type="match status" value="1"/>
</dbReference>